<name>LG3BP_PONAB</name>
<protein>
    <recommendedName>
        <fullName>Galectin-3-binding protein</fullName>
    </recommendedName>
    <alternativeName>
        <fullName>Lectin galactoside-binding soluble 3-binding protein</fullName>
    </alternativeName>
</protein>
<gene>
    <name type="primary">LGALS3BP</name>
</gene>
<evidence type="ECO:0000250" key="1">
    <source>
        <dbReference type="UniProtKB" id="Q08380"/>
    </source>
</evidence>
<evidence type="ECO:0000255" key="2"/>
<evidence type="ECO:0000255" key="3">
    <source>
        <dbReference type="PROSITE-ProRule" id="PRU00037"/>
    </source>
</evidence>
<evidence type="ECO:0000255" key="4">
    <source>
        <dbReference type="PROSITE-ProRule" id="PRU00196"/>
    </source>
</evidence>
<accession>Q5RDA4</accession>
<feature type="signal peptide" evidence="2">
    <location>
        <begin position="1"/>
        <end position="18"/>
    </location>
</feature>
<feature type="chain" id="PRO_0000357036" description="Galectin-3-binding protein">
    <location>
        <begin position="19"/>
        <end position="584"/>
    </location>
</feature>
<feature type="domain" description="SRCR" evidence="4">
    <location>
        <begin position="24"/>
        <end position="124"/>
    </location>
</feature>
<feature type="domain" description="BTB" evidence="3">
    <location>
        <begin position="153"/>
        <end position="221"/>
    </location>
</feature>
<feature type="domain" description="BACK">
    <location>
        <begin position="260"/>
        <end position="359"/>
    </location>
</feature>
<feature type="glycosylation site" description="N-linked (GlcNAc...) asparagine">
    <location>
        <position position="69"/>
    </location>
</feature>
<feature type="glycosylation site" description="N-linked (GlcNAc...) asparagine">
    <location>
        <position position="125"/>
    </location>
</feature>
<feature type="glycosylation site" description="N-linked (GlcNAc...) asparagine">
    <location>
        <position position="192"/>
    </location>
</feature>
<feature type="glycosylation site" description="N-linked (GlcNAc...) asparagine">
    <location>
        <position position="361"/>
    </location>
</feature>
<feature type="glycosylation site" description="N-linked (GlcNAc...) asparagine">
    <location>
        <position position="397"/>
    </location>
</feature>
<feature type="glycosylation site" description="N-linked (GlcNAc...) asparagine">
    <location>
        <position position="550"/>
    </location>
</feature>
<feature type="glycosylation site" description="N-linked (GlcNAc...) asparagine">
    <location>
        <position position="579"/>
    </location>
</feature>
<feature type="disulfide bond" evidence="4">
    <location>
        <begin position="49"/>
        <end position="113"/>
    </location>
</feature>
<feature type="disulfide bond" evidence="4">
    <location>
        <begin position="62"/>
        <end position="123"/>
    </location>
</feature>
<feature type="disulfide bond" evidence="4">
    <location>
        <begin position="93"/>
        <end position="103"/>
    </location>
</feature>
<proteinExistence type="evidence at protein level"/>
<reference key="1">
    <citation type="submission" date="2004-11" db="EMBL/GenBank/DDBJ databases">
        <authorList>
            <consortium name="The German cDNA consortium"/>
        </authorList>
    </citation>
    <scope>NUCLEOTIDE SEQUENCE [LARGE SCALE MRNA]</scope>
    <source>
        <tissue>Heart</tissue>
    </source>
</reference>
<dbReference type="EMBL" id="CR858011">
    <property type="protein sequence ID" value="CAH90253.1"/>
    <property type="molecule type" value="mRNA"/>
</dbReference>
<dbReference type="SMR" id="Q5RDA4"/>
<dbReference type="FunCoup" id="Q5RDA4">
    <property type="interactions" value="128"/>
</dbReference>
<dbReference type="STRING" id="9601.ENSPPYP00000009763"/>
<dbReference type="GlyCosmos" id="Q5RDA4">
    <property type="glycosylation" value="7 sites, No reported glycans"/>
</dbReference>
<dbReference type="InParanoid" id="Q5RDA4"/>
<dbReference type="Proteomes" id="UP000001595">
    <property type="component" value="Unplaced"/>
</dbReference>
<dbReference type="GO" id="GO:0031012">
    <property type="term" value="C:extracellular matrix"/>
    <property type="evidence" value="ECO:0007669"/>
    <property type="project" value="TreeGrafter"/>
</dbReference>
<dbReference type="GO" id="GO:0005615">
    <property type="term" value="C:extracellular space"/>
    <property type="evidence" value="ECO:0007669"/>
    <property type="project" value="TreeGrafter"/>
</dbReference>
<dbReference type="GO" id="GO:0016020">
    <property type="term" value="C:membrane"/>
    <property type="evidence" value="ECO:0007669"/>
    <property type="project" value="InterPro"/>
</dbReference>
<dbReference type="GO" id="GO:0007155">
    <property type="term" value="P:cell adhesion"/>
    <property type="evidence" value="ECO:0007669"/>
    <property type="project" value="UniProtKB-KW"/>
</dbReference>
<dbReference type="CDD" id="cd18496">
    <property type="entry name" value="BACK_LGALS3BP"/>
    <property type="match status" value="1"/>
</dbReference>
<dbReference type="CDD" id="cd18304">
    <property type="entry name" value="BTB_POZ_M2BP"/>
    <property type="match status" value="1"/>
</dbReference>
<dbReference type="FunFam" id="1.25.40.420:FF:000027">
    <property type="entry name" value="galectin-3-binding protein isoform X2"/>
    <property type="match status" value="1"/>
</dbReference>
<dbReference type="FunFam" id="3.30.710.10:FF:000128">
    <property type="entry name" value="galectin-3-binding protein precursor"/>
    <property type="match status" value="1"/>
</dbReference>
<dbReference type="FunFam" id="3.10.250.10:FF:000005">
    <property type="entry name" value="Neurotrypsin isoform A"/>
    <property type="match status" value="1"/>
</dbReference>
<dbReference type="Gene3D" id="1.25.40.420">
    <property type="match status" value="1"/>
</dbReference>
<dbReference type="Gene3D" id="3.30.710.10">
    <property type="entry name" value="Potassium Channel Kv1.1, Chain A"/>
    <property type="match status" value="1"/>
</dbReference>
<dbReference type="Gene3D" id="3.10.250.10">
    <property type="entry name" value="SRCR-like domain"/>
    <property type="match status" value="1"/>
</dbReference>
<dbReference type="InterPro" id="IPR011705">
    <property type="entry name" value="BACK"/>
</dbReference>
<dbReference type="InterPro" id="IPR051481">
    <property type="entry name" value="BTB-POZ/Galectin-3-binding"/>
</dbReference>
<dbReference type="InterPro" id="IPR000210">
    <property type="entry name" value="BTB/POZ_dom"/>
</dbReference>
<dbReference type="InterPro" id="IPR011333">
    <property type="entry name" value="SKP1/BTB/POZ_sf"/>
</dbReference>
<dbReference type="InterPro" id="IPR001190">
    <property type="entry name" value="SRCR"/>
</dbReference>
<dbReference type="InterPro" id="IPR036772">
    <property type="entry name" value="SRCR-like_dom_sf"/>
</dbReference>
<dbReference type="PANTHER" id="PTHR24410:SF16">
    <property type="entry name" value="GALECTIN-3-BINDING PROTEIN"/>
    <property type="match status" value="1"/>
</dbReference>
<dbReference type="PANTHER" id="PTHR24410">
    <property type="entry name" value="HL07962P-RELATED"/>
    <property type="match status" value="1"/>
</dbReference>
<dbReference type="Pfam" id="PF07707">
    <property type="entry name" value="BACK"/>
    <property type="match status" value="1"/>
</dbReference>
<dbReference type="Pfam" id="PF00530">
    <property type="entry name" value="SRCR"/>
    <property type="match status" value="1"/>
</dbReference>
<dbReference type="PRINTS" id="PR00258">
    <property type="entry name" value="SPERACTRCPTR"/>
</dbReference>
<dbReference type="SMART" id="SM00875">
    <property type="entry name" value="BACK"/>
    <property type="match status" value="1"/>
</dbReference>
<dbReference type="SMART" id="SM00202">
    <property type="entry name" value="SR"/>
    <property type="match status" value="1"/>
</dbReference>
<dbReference type="SUPFAM" id="SSF56487">
    <property type="entry name" value="SRCR-like"/>
    <property type="match status" value="1"/>
</dbReference>
<dbReference type="PROSITE" id="PS50097">
    <property type="entry name" value="BTB"/>
    <property type="match status" value="1"/>
</dbReference>
<dbReference type="PROSITE" id="PS00420">
    <property type="entry name" value="SRCR_1"/>
    <property type="match status" value="1"/>
</dbReference>
<dbReference type="PROSITE" id="PS50287">
    <property type="entry name" value="SRCR_2"/>
    <property type="match status" value="1"/>
</dbReference>
<organism>
    <name type="scientific">Pongo abelii</name>
    <name type="common">Sumatran orangutan</name>
    <name type="synonym">Pongo pygmaeus abelii</name>
    <dbReference type="NCBI Taxonomy" id="9601"/>
    <lineage>
        <taxon>Eukaryota</taxon>
        <taxon>Metazoa</taxon>
        <taxon>Chordata</taxon>
        <taxon>Craniata</taxon>
        <taxon>Vertebrata</taxon>
        <taxon>Euteleostomi</taxon>
        <taxon>Mammalia</taxon>
        <taxon>Eutheria</taxon>
        <taxon>Euarchontoglires</taxon>
        <taxon>Primates</taxon>
        <taxon>Haplorrhini</taxon>
        <taxon>Catarrhini</taxon>
        <taxon>Hominidae</taxon>
        <taxon>Pongo</taxon>
    </lineage>
</organism>
<sequence>MTPPRLFWVWLLVAGTQGVNDGDMRLADGGATNQGRVEIFYRGQWGTVCDNLWDLTDASVVCRALGFENATQALGRAAFGQGSGPIMLDEVQCTGTEASLADCKSLGWLKSNCRHERDAGVVCTNETRSTHTLDLSRELSEALGQIFDSQRGCDLSISVNVQGEDALGFCGHTVILTANLEAQALWKEPGSNVTMSVDAECVPMVRDLLRYFYSRRIDITLSSVKCFHKLASAYGARQLQGYCATLFAILLPQDPSFHMPLDLYAYAVATGDALLEKLCLQFLAWNFEALTQAEAWPSVPTDLLQLLLPRSDLAVPSELALLKAVDTWWGERASHEEVEGLVEKIRFPMMLPEELFELQFNLSLYWSHEALFQKKTLQALEFHTVPFQLLARYKGLNLTEDTYKPRIYTSPTWSAFVTDSSWSARKSQLVYQSRRGPLVKYSSDYFQAPSDYRYYPYQSFQTPQHPSFLFQDKRVSWSLVYLPTIQSCWNYGFSCSSDELPVLGLTKSGGSDRTIAYENKALMLCEGLFVADVTDFEGWKAAIPSALDTNSSKSTSSFPCPAGHFNGFRTVIRPFYLTNSSGVD</sequence>
<keyword id="KW-0130">Cell adhesion</keyword>
<keyword id="KW-1015">Disulfide bond</keyword>
<keyword id="KW-0272">Extracellular matrix</keyword>
<keyword id="KW-0325">Glycoprotein</keyword>
<keyword id="KW-1185">Reference proteome</keyword>
<keyword id="KW-0964">Secreted</keyword>
<keyword id="KW-0732">Signal</keyword>
<comment type="function">
    <text evidence="1">Promotes integrin-mediated cell adhesion. May stimulate host defense against viruses and tumor cells (By similarity).</text>
</comment>
<comment type="subunit">
    <text evidence="1">Homodimers and homomultimers. The multimers form ring-like structures with a diameter of 30-40 nm. Binds LGALS1 and LGALS3. Binds ITGB1, COL4A1, COL5A1, COL6A1, FN1 and NID. Interacts with the gamma-tubulin ring complex (gamma-TuRC), composed of gamma-tubulin, TUBGCP2, TUBGCP3, TUBGCP4, TUBGCP5 and TUBGCP6. The unglycosylated form interacts with PDE4DIP; this interaction, which is PDE4DIP isoform-specific, may connect a pericentrosomal complex, made of AKAP9, CDK5RAP2, EB1/MAPRE1 and PDE4DIP, to the gamma-tubulin ring complex (gamma-TuRC) to promote microtubule assembly and acetylation.</text>
</comment>
<comment type="subcellular location">
    <subcellularLocation>
        <location evidence="1">Secreted</location>
    </subcellularLocation>
    <subcellularLocation>
        <location evidence="1">Secreted</location>
        <location evidence="1">Extracellular space</location>
        <location evidence="1">Extracellular matrix</location>
    </subcellularLocation>
</comment>